<name>CCD40_CHLRE</name>
<evidence type="ECO:0000255" key="1"/>
<evidence type="ECO:0000256" key="2">
    <source>
        <dbReference type="SAM" id="MobiDB-lite"/>
    </source>
</evidence>
<evidence type="ECO:0000269" key="3">
    <source>
    </source>
</evidence>
<evidence type="ECO:0000269" key="4">
    <source>
    </source>
</evidence>
<evidence type="ECO:0000303" key="5">
    <source>
    </source>
</evidence>
<evidence type="ECO:0000305" key="6"/>
<evidence type="ECO:0000312" key="7">
    <source>
        <dbReference type="EMBL" id="EDP04735.1"/>
    </source>
</evidence>
<feature type="chain" id="PRO_0000431956" description="Coiled-coil domain-containing protein 40 homolog">
    <location>
        <begin position="1"/>
        <end position="576"/>
    </location>
</feature>
<feature type="region of interest" description="Disordered" evidence="2">
    <location>
        <begin position="1"/>
        <end position="28"/>
    </location>
</feature>
<feature type="region of interest" description="Disordered" evidence="2">
    <location>
        <begin position="465"/>
        <end position="500"/>
    </location>
</feature>
<feature type="coiled-coil region" evidence="1">
    <location>
        <begin position="33"/>
        <end position="175"/>
    </location>
</feature>
<feature type="coiled-coil region" evidence="1">
    <location>
        <begin position="232"/>
        <end position="269"/>
    </location>
</feature>
<feature type="coiled-coil region" evidence="1">
    <location>
        <begin position="311"/>
        <end position="397"/>
    </location>
</feature>
<feature type="compositionally biased region" description="Low complexity" evidence="2">
    <location>
        <begin position="465"/>
        <end position="497"/>
    </location>
</feature>
<feature type="modified residue" description="Asymmetric dimethylarginine" evidence="3">
    <location>
        <position position="246"/>
    </location>
</feature>
<feature type="modified residue" description="Asymmetric dimethylarginine" evidence="3">
    <location>
        <position position="523"/>
    </location>
</feature>
<accession>A8IQT2</accession>
<keyword id="KW-0966">Cell projection</keyword>
<keyword id="KW-0969">Cilium</keyword>
<keyword id="KW-0970">Cilium biogenesis/degradation</keyword>
<keyword id="KW-0175">Coiled coil</keyword>
<keyword id="KW-0282">Flagellum</keyword>
<keyword id="KW-0488">Methylation</keyword>
<proteinExistence type="evidence at protein level"/>
<sequence>MADPMDQPSTSDPVDNQIFGEQGGLRPDHPLLRRAQEALKVQFEANRTRLQEELREKANALKQAKARREALGVELYGFQQNLAKLQLNLETTHQNYQCEDQLNQLKQQLSLEEGDTKGERSRRVCVCVCRVCCRIDTLQDNLKGTQQQLALVSAQLEAQKRETRAALETLAEAEVGGCVRDEALSAIQDGMREQQQQELSLVLEIEGYKKDVVREQLKHESLTAVVRKVEGDAVFVQKQIEGAQERQARLQEILAKLAKSLEHTEAEGEADAVDRAITKVAAEGRAIEEEMLSALSDQTTAEKATSKTAADTQELRKRIRAEELAVVETENELAKLQVDILNTEAHNSRLGETLGLLDEELRDKGRTIEKYELEIKRRNDEIEKKTREIDILNRRRDCRGSAALDTRPLQAPPPPQVKSDLALTTPMYTPPPVPQPSVGMTVTTEKLVSDMEKALTKREIISVKGRATAAKSKSSTPAGSATASSRASPSASVASSTLTRNQLDRATTDLAKSIKDLEAGRYRPVVEDAAAVGEELGRAQDKLGRVVALLEGLRQAAPHLAGELDKVLCHVADVRA</sequence>
<comment type="function">
    <text evidence="4">Required for assembly of dynein regulatory complex (DRC) and inner dynein arm complexes, which are responsible for ciliary beat regulation, by acting as a molecular ruler that determines the 96 nanometer (nm) repeat length and arrangements of components in cilia and flagella (PubMed:25395538). Together with CCDC39/FAP59 forms a 96-nm-long complex in flagella. This complex does not act as a physical ruler, but rather act as a negative regulator for radial spokes: the complex lays along specific protofilaments, masking radial spoke binding sites and allowing recruitment of inner dynein arm (IDA) and nexin-dynein regulatory complexes (N-DRC) (PubMed:25395538).</text>
</comment>
<comment type="subunit">
    <text evidence="4">Interacts with CCDC39/FAP59.</text>
</comment>
<comment type="interaction">
    <interactant intactId="EBI-16127612">
        <id>A8IQT2</id>
    </interactant>
    <interactant intactId="EBI-16127597">
        <id>A8IQE0</id>
        <label>CCDC39</label>
    </interactant>
    <organismsDiffer>false</organismsDiffer>
    <experiments>2</experiments>
</comment>
<comment type="subcellular location">
    <subcellularLocation>
        <location evidence="4">Cell projection</location>
        <location evidence="4">Cilium</location>
        <location evidence="4">Flagellum</location>
    </subcellularLocation>
</comment>
<comment type="PTM">
    <text evidence="3">Asymmetrically dimethylated at Arg-246 and Arg-523 during flagellum resorption. Probably methylated by PRMT1.</text>
</comment>
<comment type="disruption phenotype">
    <text evidence="4">Short and immotile flagella. Inner dynein arm (IDA) and nexin-dynein regulatory complex (N-DRC) components are absent or severely reduced. Radial spokes are attached to doublet microtubules with an irregular periodicity of 32 nm instead of 96 nm.</text>
</comment>
<comment type="similarity">
    <text evidence="6">Belongs to the CCDC40 family.</text>
</comment>
<comment type="online information" name="Protein Spotlight">
    <link uri="https://www.proteinspotlight.org/back_issues/170/"/>
    <text>The length of things - Issue 170 of June 2015</text>
</comment>
<gene>
    <name type="primary">CCDC40</name>
    <name evidence="5" type="synonym">FAP172</name>
    <name evidence="7" type="ORF">CHLREDRAFT_170513</name>
</gene>
<dbReference type="EMBL" id="DS496120">
    <property type="protein sequence ID" value="EDP04735.1"/>
    <property type="molecule type" value="Genomic_DNA"/>
</dbReference>
<dbReference type="RefSeq" id="XP_001691627.1">
    <property type="nucleotide sequence ID" value="XM_001691575.1"/>
</dbReference>
<dbReference type="SMR" id="A8IQT2"/>
<dbReference type="DIP" id="DIP-61435N"/>
<dbReference type="IntAct" id="A8IQT2">
    <property type="interactions" value="1"/>
</dbReference>
<dbReference type="iPTMnet" id="A8IQT2"/>
<dbReference type="PaxDb" id="3055-EDP04735"/>
<dbReference type="eggNOG" id="ENOG502QQ91">
    <property type="taxonomic scope" value="Eukaryota"/>
</dbReference>
<dbReference type="HOGENOM" id="CLU_473593_0_0_1"/>
<dbReference type="GO" id="GO:0031514">
    <property type="term" value="C:motile cilium"/>
    <property type="evidence" value="ECO:0007669"/>
    <property type="project" value="UniProtKB-SubCell"/>
</dbReference>
<dbReference type="GO" id="GO:0035082">
    <property type="term" value="P:axoneme assembly"/>
    <property type="evidence" value="ECO:0007669"/>
    <property type="project" value="InterPro"/>
</dbReference>
<dbReference type="InterPro" id="IPR037386">
    <property type="entry name" value="CCDC40"/>
</dbReference>
<dbReference type="PANTHER" id="PTHR16275">
    <property type="entry name" value="COILED-COIL DOMAIN-CONTAINING PROTEIN 40"/>
    <property type="match status" value="1"/>
</dbReference>
<dbReference type="PANTHER" id="PTHR16275:SF8">
    <property type="entry name" value="COILED-COIL DOMAIN-CONTAINING PROTEIN 40"/>
    <property type="match status" value="1"/>
</dbReference>
<organism>
    <name type="scientific">Chlamydomonas reinhardtii</name>
    <name type="common">Chlamydomonas smithii</name>
    <dbReference type="NCBI Taxonomy" id="3055"/>
    <lineage>
        <taxon>Eukaryota</taxon>
        <taxon>Viridiplantae</taxon>
        <taxon>Chlorophyta</taxon>
        <taxon>core chlorophytes</taxon>
        <taxon>Chlorophyceae</taxon>
        <taxon>CS clade</taxon>
        <taxon>Chlamydomonadales</taxon>
        <taxon>Chlamydomonadaceae</taxon>
        <taxon>Chlamydomonas</taxon>
    </lineage>
</organism>
<reference key="1">
    <citation type="journal article" date="2007" name="Science">
        <title>The Chlamydomonas genome reveals the evolution of key animal and plant functions.</title>
        <authorList>
            <person name="Merchant S.S."/>
            <person name="Prochnik S.E."/>
            <person name="Vallon O."/>
            <person name="Harris E.H."/>
            <person name="Karpowicz S.J."/>
            <person name="Witman G.B."/>
            <person name="Terry A."/>
            <person name="Salamov A."/>
            <person name="Fritz-Laylin L.K."/>
            <person name="Marechal-Drouard L."/>
            <person name="Marshall W.F."/>
            <person name="Qu L.H."/>
            <person name="Nelson D.R."/>
            <person name="Sanderfoot A.A."/>
            <person name="Spalding M.H."/>
            <person name="Kapitonov V.V."/>
            <person name="Ren Q."/>
            <person name="Ferris P."/>
            <person name="Lindquist E."/>
            <person name="Shapiro H."/>
            <person name="Lucas S.M."/>
            <person name="Grimwood J."/>
            <person name="Schmutz J."/>
            <person name="Cardol P."/>
            <person name="Cerutti H."/>
            <person name="Chanfreau G."/>
            <person name="Chen C.L."/>
            <person name="Cognat V."/>
            <person name="Croft M.T."/>
            <person name="Dent R."/>
            <person name="Dutcher S."/>
            <person name="Fernandez E."/>
            <person name="Fukuzawa H."/>
            <person name="Gonzalez-Ballester D."/>
            <person name="Gonzalez-Halphen D."/>
            <person name="Hallmann A."/>
            <person name="Hanikenne M."/>
            <person name="Hippler M."/>
            <person name="Inwood W."/>
            <person name="Jabbari K."/>
            <person name="Kalanon M."/>
            <person name="Kuras R."/>
            <person name="Lefebvre P.A."/>
            <person name="Lemaire S.D."/>
            <person name="Lobanov A.V."/>
            <person name="Lohr M."/>
            <person name="Manuell A."/>
            <person name="Meier I."/>
            <person name="Mets L."/>
            <person name="Mittag M."/>
            <person name="Mittelmeier T."/>
            <person name="Moroney J.V."/>
            <person name="Moseley J."/>
            <person name="Napoli C."/>
            <person name="Nedelcu A.M."/>
            <person name="Niyogi K."/>
            <person name="Novoselov S.V."/>
            <person name="Paulsen I.T."/>
            <person name="Pazour G.J."/>
            <person name="Purton S."/>
            <person name="Ral J.P."/>
            <person name="Riano-Pachon D.M."/>
            <person name="Riekhof W."/>
            <person name="Rymarquis L."/>
            <person name="Schroda M."/>
            <person name="Stern D."/>
            <person name="Umen J."/>
            <person name="Willows R."/>
            <person name="Wilson N."/>
            <person name="Zimmer S.L."/>
            <person name="Allmer J."/>
            <person name="Balk J."/>
            <person name="Bisova K."/>
            <person name="Chen C.J."/>
            <person name="Elias M."/>
            <person name="Gendler K."/>
            <person name="Hauser C."/>
            <person name="Lamb M.R."/>
            <person name="Ledford H."/>
            <person name="Long J.C."/>
            <person name="Minagawa J."/>
            <person name="Page M.D."/>
            <person name="Pan J."/>
            <person name="Pootakham W."/>
            <person name="Roje S."/>
            <person name="Rose A."/>
            <person name="Stahlberg E."/>
            <person name="Terauchi A.M."/>
            <person name="Yang P."/>
            <person name="Ball S."/>
            <person name="Bowler C."/>
            <person name="Dieckmann C.L."/>
            <person name="Gladyshev V.N."/>
            <person name="Green P."/>
            <person name="Jorgensen R."/>
            <person name="Mayfield S."/>
            <person name="Mueller-Roeber B."/>
            <person name="Rajamani S."/>
            <person name="Sayre R.T."/>
            <person name="Brokstein P."/>
            <person name="Dubchak I."/>
            <person name="Goodstein D."/>
            <person name="Hornick L."/>
            <person name="Huang Y.W."/>
            <person name="Jhaveri J."/>
            <person name="Luo Y."/>
            <person name="Martinez D."/>
            <person name="Ngau W.C."/>
            <person name="Otillar B."/>
            <person name="Poliakov A."/>
            <person name="Porter A."/>
            <person name="Szajkowski L."/>
            <person name="Werner G."/>
            <person name="Zhou K."/>
            <person name="Grigoriev I.V."/>
            <person name="Rokhsar D.S."/>
            <person name="Grossman A.R."/>
        </authorList>
    </citation>
    <scope>NUCLEOTIDE SEQUENCE [LARGE SCALE GENOMIC DNA]</scope>
    <source>
        <strain>CC-503</strain>
        <strain>cw92</strain>
    </source>
</reference>
<reference key="2">
    <citation type="journal article" date="2005" name="J. Cell Biol.">
        <title>Proteomic analysis of a eukaryotic cilium.</title>
        <authorList>
            <person name="Pazour G.J."/>
            <person name="Agrin N."/>
            <person name="Leszyk J."/>
            <person name="Witman G.B."/>
        </authorList>
    </citation>
    <scope>IDENTIFICATION BY MASS SPECTROMETRY</scope>
</reference>
<reference key="3">
    <citation type="journal article" date="2013" name="Biochemistry">
        <title>Methylation of structural components of the axoneme occurs during flagellar disassembly.</title>
        <authorList>
            <person name="Werner-Peterson R."/>
            <person name="Sloboda R.D."/>
        </authorList>
    </citation>
    <scope>METHYLATION AT ARG-246 AND ARG-523</scope>
</reference>
<reference key="4">
    <citation type="journal article" date="2014" name="Science">
        <title>Cilia and flagella. A molecular ruler determines the repeat length in eukaryotic cilia and flagella.</title>
        <authorList>
            <person name="Oda T."/>
            <person name="Yanagisawa H."/>
            <person name="Kamiya R."/>
            <person name="Kikkawa M."/>
        </authorList>
    </citation>
    <scope>FUNCTION</scope>
    <scope>SUBCELLULAR LOCATION</scope>
    <scope>INTERACTION WITH CCDC39/FAP59</scope>
    <scope>DISRUPTION PHENOTYPE</scope>
</reference>
<protein>
    <recommendedName>
        <fullName evidence="6">Coiled-coil domain-containing protein 40 homolog</fullName>
    </recommendedName>
    <alternativeName>
        <fullName evidence="5">Flagellar-associated protein 172</fullName>
    </alternativeName>
</protein>